<keyword id="KW-0418">Kinase</keyword>
<keyword id="KW-0547">Nucleotide-binding</keyword>
<keyword id="KW-0723">Serine/threonine-protein kinase</keyword>
<keyword id="KW-0808">Transferase</keyword>
<accession>Q1C752</accession>
<reference key="1">
    <citation type="journal article" date="2006" name="J. Bacteriol.">
        <title>Complete genome sequence of Yersinia pestis strains Antiqua and Nepal516: evidence of gene reduction in an emerging pathogen.</title>
        <authorList>
            <person name="Chain P.S.G."/>
            <person name="Hu P."/>
            <person name="Malfatti S.A."/>
            <person name="Radnedge L."/>
            <person name="Larimer F."/>
            <person name="Vergez L.M."/>
            <person name="Worsham P."/>
            <person name="Chu M.C."/>
            <person name="Andersen G.L."/>
        </authorList>
    </citation>
    <scope>NUCLEOTIDE SEQUENCE [LARGE SCALE GENOMIC DNA]</scope>
    <source>
        <strain>Antiqua</strain>
    </source>
</reference>
<protein>
    <recommendedName>
        <fullName evidence="1">Putative phosphoenolpyruvate synthase regulatory protein</fullName>
        <shortName evidence="1">PEP synthase regulatory protein</shortName>
        <shortName evidence="1">PSRP</shortName>
        <ecNumber evidence="1">2.7.11.33</ecNumber>
        <ecNumber evidence="1">2.7.4.28</ecNumber>
    </recommendedName>
    <alternativeName>
        <fullName evidence="1">Pyruvate, water dikinase regulatory protein</fullName>
    </alternativeName>
</protein>
<gene>
    <name type="ordered locus">YPA_1754</name>
</gene>
<proteinExistence type="inferred from homology"/>
<organism>
    <name type="scientific">Yersinia pestis bv. Antiqua (strain Antiqua)</name>
    <dbReference type="NCBI Taxonomy" id="360102"/>
    <lineage>
        <taxon>Bacteria</taxon>
        <taxon>Pseudomonadati</taxon>
        <taxon>Pseudomonadota</taxon>
        <taxon>Gammaproteobacteria</taxon>
        <taxon>Enterobacterales</taxon>
        <taxon>Yersiniaceae</taxon>
        <taxon>Yersinia</taxon>
    </lineage>
</organism>
<evidence type="ECO:0000255" key="1">
    <source>
        <dbReference type="HAMAP-Rule" id="MF_01062"/>
    </source>
</evidence>
<dbReference type="EC" id="2.7.11.33" evidence="1"/>
<dbReference type="EC" id="2.7.4.28" evidence="1"/>
<dbReference type="EMBL" id="CP000308">
    <property type="protein sequence ID" value="ABG13720.1"/>
    <property type="molecule type" value="Genomic_DNA"/>
</dbReference>
<dbReference type="RefSeq" id="WP_002211814.1">
    <property type="nucleotide sequence ID" value="NZ_CP009906.1"/>
</dbReference>
<dbReference type="SMR" id="Q1C752"/>
<dbReference type="KEGG" id="ypa:YPA_1754"/>
<dbReference type="Proteomes" id="UP000001971">
    <property type="component" value="Chromosome"/>
</dbReference>
<dbReference type="GO" id="GO:0043531">
    <property type="term" value="F:ADP binding"/>
    <property type="evidence" value="ECO:0007669"/>
    <property type="project" value="UniProtKB-UniRule"/>
</dbReference>
<dbReference type="GO" id="GO:0005524">
    <property type="term" value="F:ATP binding"/>
    <property type="evidence" value="ECO:0007669"/>
    <property type="project" value="InterPro"/>
</dbReference>
<dbReference type="GO" id="GO:0003677">
    <property type="term" value="F:DNA binding"/>
    <property type="evidence" value="ECO:0007669"/>
    <property type="project" value="InterPro"/>
</dbReference>
<dbReference type="GO" id="GO:0016776">
    <property type="term" value="F:phosphotransferase activity, phosphate group as acceptor"/>
    <property type="evidence" value="ECO:0007669"/>
    <property type="project" value="UniProtKB-UniRule"/>
</dbReference>
<dbReference type="GO" id="GO:0004674">
    <property type="term" value="F:protein serine/threonine kinase activity"/>
    <property type="evidence" value="ECO:0007669"/>
    <property type="project" value="UniProtKB-UniRule"/>
</dbReference>
<dbReference type="GO" id="GO:0006355">
    <property type="term" value="P:regulation of DNA-templated transcription"/>
    <property type="evidence" value="ECO:0007669"/>
    <property type="project" value="InterPro"/>
</dbReference>
<dbReference type="HAMAP" id="MF_01062">
    <property type="entry name" value="PSRP"/>
    <property type="match status" value="1"/>
</dbReference>
<dbReference type="InterPro" id="IPR005177">
    <property type="entry name" value="Kinase-pyrophosphorylase"/>
</dbReference>
<dbReference type="InterPro" id="IPR026530">
    <property type="entry name" value="PSRP"/>
</dbReference>
<dbReference type="InterPro" id="IPR008917">
    <property type="entry name" value="TF_DNA-bd_sf"/>
</dbReference>
<dbReference type="NCBIfam" id="NF003742">
    <property type="entry name" value="PRK05339.1"/>
    <property type="match status" value="1"/>
</dbReference>
<dbReference type="PANTHER" id="PTHR31756">
    <property type="entry name" value="PYRUVATE, PHOSPHATE DIKINASE REGULATORY PROTEIN 1, CHLOROPLASTIC"/>
    <property type="match status" value="1"/>
</dbReference>
<dbReference type="PANTHER" id="PTHR31756:SF3">
    <property type="entry name" value="PYRUVATE, PHOSPHATE DIKINASE REGULATORY PROTEIN 1, CHLOROPLASTIC"/>
    <property type="match status" value="1"/>
</dbReference>
<dbReference type="Pfam" id="PF03618">
    <property type="entry name" value="Kinase-PPPase"/>
    <property type="match status" value="1"/>
</dbReference>
<dbReference type="SUPFAM" id="SSF47454">
    <property type="entry name" value="A DNA-binding domain in eukaryotic transcription factors"/>
    <property type="match status" value="1"/>
</dbReference>
<comment type="function">
    <text evidence="1">Bifunctional serine/threonine kinase and phosphorylase involved in the regulation of the phosphoenolpyruvate synthase (PEPS) by catalyzing its phosphorylation/dephosphorylation.</text>
</comment>
<comment type="catalytic activity">
    <reaction evidence="1">
        <text>[pyruvate, water dikinase] + ADP = [pyruvate, water dikinase]-phosphate + AMP + H(+)</text>
        <dbReference type="Rhea" id="RHEA:46020"/>
        <dbReference type="Rhea" id="RHEA-COMP:11425"/>
        <dbReference type="Rhea" id="RHEA-COMP:11426"/>
        <dbReference type="ChEBI" id="CHEBI:15378"/>
        <dbReference type="ChEBI" id="CHEBI:43176"/>
        <dbReference type="ChEBI" id="CHEBI:68546"/>
        <dbReference type="ChEBI" id="CHEBI:456215"/>
        <dbReference type="ChEBI" id="CHEBI:456216"/>
        <dbReference type="EC" id="2.7.11.33"/>
    </reaction>
</comment>
<comment type="catalytic activity">
    <reaction evidence="1">
        <text>[pyruvate, water dikinase]-phosphate + phosphate + H(+) = [pyruvate, water dikinase] + diphosphate</text>
        <dbReference type="Rhea" id="RHEA:48580"/>
        <dbReference type="Rhea" id="RHEA-COMP:11425"/>
        <dbReference type="Rhea" id="RHEA-COMP:11426"/>
        <dbReference type="ChEBI" id="CHEBI:15378"/>
        <dbReference type="ChEBI" id="CHEBI:33019"/>
        <dbReference type="ChEBI" id="CHEBI:43176"/>
        <dbReference type="ChEBI" id="CHEBI:43474"/>
        <dbReference type="ChEBI" id="CHEBI:68546"/>
        <dbReference type="EC" id="2.7.4.28"/>
    </reaction>
</comment>
<comment type="similarity">
    <text evidence="1">Belongs to the pyruvate, phosphate/water dikinase regulatory protein family. PSRP subfamily.</text>
</comment>
<name>PSRP_YERPA</name>
<sequence>MERCVFYISDGTAITAEVLGHAVLSQFPINVTTFTLPFVENAARAQSVCKQINEIYQDTGVRPLVFYSIISLEVREIIQRSEGFCQDIVQALVAPLQGELGVPPQPVLNRTHGLTESNLDKYDARIAAIDYALAHDDGISLRNLDQAQVILLGVSRCGKTPTSLYLAMQFGIRAANYPFIADDMDNLQLPAALKPFQHKLFGLTINPERLAAIREERRENSRYASLRQCRMEVGEVEALFRKNQIRYLNSTNYSVEEISTKILDILGMSRRMF</sequence>
<feature type="chain" id="PRO_0000316758" description="Putative phosphoenolpyruvate synthase regulatory protein">
    <location>
        <begin position="1"/>
        <end position="273"/>
    </location>
</feature>
<feature type="binding site" evidence="1">
    <location>
        <begin position="153"/>
        <end position="160"/>
    </location>
    <ligand>
        <name>ADP</name>
        <dbReference type="ChEBI" id="CHEBI:456216"/>
    </ligand>
</feature>